<keyword id="KW-0169">Cobalamin biosynthesis</keyword>
<keyword id="KW-0489">Methyltransferase</keyword>
<keyword id="KW-1185">Reference proteome</keyword>
<keyword id="KW-0949">S-adenosyl-L-methionine</keyword>
<keyword id="KW-0808">Transferase</keyword>
<feature type="chain" id="PRO_0000257776" description="Cobalt-precorrin-5B C(1)-methyltransferase">
    <location>
        <begin position="1"/>
        <end position="388"/>
    </location>
</feature>
<sequence length="388" mass="41209">MPERRELREPPMPPSMARVRGRKLRTGWTTGTCAAAAAKAAARALASGEAQEMVEVRLPGRGEGRRVRFGVERCELGEGWAEAVVVKDAGDDPDVTHGAHLTARVSWREEPGVELDRGEGVGVVTKPGLGLPVGAPAINPVPRRMILYSLEEALDTRRRGVRVVISVPGGEEMARKTTNPRLGIVGGISILGTTGIVRPFSTAAWAASVVQAIDVVAAQGGDTFVLSTGGLTERAAMRLLPHLEEVCFIEVGDFTGQAVRRAAKRGLGRGFFVGMAGKLAKLASGVMMTHWTRSRVDTSLLAEITRKAGGSERLAEEVEGANSARHAYELWRAAGLSGAPRLLCARVAENLREHAGGALEMHAIMVDFDTLEPVGASPGALELTAWRG</sequence>
<comment type="function">
    <text evidence="1">Catalyzes the methylation of C-1 in cobalt-precorrin-5B to form cobalt-precorrin-6A.</text>
</comment>
<comment type="catalytic activity">
    <reaction evidence="1">
        <text>Co-precorrin-5B + S-adenosyl-L-methionine = Co-precorrin-6A + S-adenosyl-L-homocysteine</text>
        <dbReference type="Rhea" id="RHEA:26285"/>
        <dbReference type="ChEBI" id="CHEBI:57856"/>
        <dbReference type="ChEBI" id="CHEBI:59789"/>
        <dbReference type="ChEBI" id="CHEBI:60063"/>
        <dbReference type="ChEBI" id="CHEBI:60064"/>
        <dbReference type="EC" id="2.1.1.195"/>
    </reaction>
</comment>
<comment type="pathway">
    <text evidence="1">Cofactor biosynthesis; adenosylcobalamin biosynthesis; cob(II)yrinate a,c-diamide from sirohydrochlorin (anaerobic route): step 6/10.</text>
</comment>
<comment type="similarity">
    <text evidence="1">Belongs to the CbiD family.</text>
</comment>
<evidence type="ECO:0000255" key="1">
    <source>
        <dbReference type="HAMAP-Rule" id="MF_00787"/>
    </source>
</evidence>
<name>CBID_RUBXD</name>
<dbReference type="EC" id="2.1.1.195" evidence="1"/>
<dbReference type="EMBL" id="CP000386">
    <property type="protein sequence ID" value="ABG03611.1"/>
    <property type="molecule type" value="Genomic_DNA"/>
</dbReference>
<dbReference type="RefSeq" id="WP_011563629.1">
    <property type="nucleotide sequence ID" value="NC_008148.1"/>
</dbReference>
<dbReference type="SMR" id="Q1AYB7"/>
<dbReference type="STRING" id="266117.Rxyl_0641"/>
<dbReference type="KEGG" id="rxy:Rxyl_0641"/>
<dbReference type="eggNOG" id="COG1903">
    <property type="taxonomic scope" value="Bacteria"/>
</dbReference>
<dbReference type="HOGENOM" id="CLU_041273_0_0_11"/>
<dbReference type="OrthoDB" id="6439987at2"/>
<dbReference type="PhylomeDB" id="Q1AYB7"/>
<dbReference type="UniPathway" id="UPA00148">
    <property type="reaction ID" value="UER00227"/>
</dbReference>
<dbReference type="Proteomes" id="UP000006637">
    <property type="component" value="Chromosome"/>
</dbReference>
<dbReference type="GO" id="GO:0043780">
    <property type="term" value="F:cobalt-precorrin-5B C1-methyltransferase activity"/>
    <property type="evidence" value="ECO:0007669"/>
    <property type="project" value="RHEA"/>
</dbReference>
<dbReference type="GO" id="GO:0019251">
    <property type="term" value="P:anaerobic cobalamin biosynthetic process"/>
    <property type="evidence" value="ECO:0007669"/>
    <property type="project" value="UniProtKB-UniRule"/>
</dbReference>
<dbReference type="GO" id="GO:0032259">
    <property type="term" value="P:methylation"/>
    <property type="evidence" value="ECO:0007669"/>
    <property type="project" value="UniProtKB-KW"/>
</dbReference>
<dbReference type="Gene3D" id="3.30.2110.10">
    <property type="entry name" value="CbiD-like"/>
    <property type="match status" value="1"/>
</dbReference>
<dbReference type="HAMAP" id="MF_00787">
    <property type="entry name" value="CbiD"/>
    <property type="match status" value="1"/>
</dbReference>
<dbReference type="InterPro" id="IPR002748">
    <property type="entry name" value="CbiD"/>
</dbReference>
<dbReference type="InterPro" id="IPR036074">
    <property type="entry name" value="CbiD_sf"/>
</dbReference>
<dbReference type="NCBIfam" id="TIGR00312">
    <property type="entry name" value="cbiD"/>
    <property type="match status" value="1"/>
</dbReference>
<dbReference type="NCBIfam" id="NF000849">
    <property type="entry name" value="PRK00075.1-1"/>
    <property type="match status" value="1"/>
</dbReference>
<dbReference type="PANTHER" id="PTHR35863">
    <property type="entry name" value="COBALT-PRECORRIN-5B C(1)-METHYLTRANSFERASE"/>
    <property type="match status" value="1"/>
</dbReference>
<dbReference type="PANTHER" id="PTHR35863:SF1">
    <property type="entry name" value="COBALT-PRECORRIN-5B C(1)-METHYLTRANSFERASE"/>
    <property type="match status" value="1"/>
</dbReference>
<dbReference type="Pfam" id="PF01888">
    <property type="entry name" value="CbiD"/>
    <property type="match status" value="1"/>
</dbReference>
<dbReference type="PIRSF" id="PIRSF026782">
    <property type="entry name" value="CbiD"/>
    <property type="match status" value="1"/>
</dbReference>
<dbReference type="SUPFAM" id="SSF111342">
    <property type="entry name" value="CbiD-like"/>
    <property type="match status" value="1"/>
</dbReference>
<organism>
    <name type="scientific">Rubrobacter xylanophilus (strain DSM 9941 / JCM 11954 / NBRC 16129 / PRD-1)</name>
    <dbReference type="NCBI Taxonomy" id="266117"/>
    <lineage>
        <taxon>Bacteria</taxon>
        <taxon>Bacillati</taxon>
        <taxon>Actinomycetota</taxon>
        <taxon>Rubrobacteria</taxon>
        <taxon>Rubrobacterales</taxon>
        <taxon>Rubrobacteraceae</taxon>
        <taxon>Rubrobacter</taxon>
    </lineage>
</organism>
<proteinExistence type="inferred from homology"/>
<gene>
    <name evidence="1" type="primary">cbiD</name>
    <name type="ordered locus">Rxyl_0641</name>
</gene>
<reference key="1">
    <citation type="submission" date="2006-06" db="EMBL/GenBank/DDBJ databases">
        <title>Complete sequence of Rubrobacter xylanophilus DSM 9941.</title>
        <authorList>
            <consortium name="US DOE Joint Genome Institute"/>
            <person name="Copeland A."/>
            <person name="Lucas S."/>
            <person name="Lapidus A."/>
            <person name="Barry K."/>
            <person name="Detter J.C."/>
            <person name="Glavina del Rio T."/>
            <person name="Hammon N."/>
            <person name="Israni S."/>
            <person name="Dalin E."/>
            <person name="Tice H."/>
            <person name="Pitluck S."/>
            <person name="Munk A.C."/>
            <person name="Brettin T."/>
            <person name="Bruce D."/>
            <person name="Han C."/>
            <person name="Tapia R."/>
            <person name="Gilna P."/>
            <person name="Schmutz J."/>
            <person name="Larimer F."/>
            <person name="Land M."/>
            <person name="Hauser L."/>
            <person name="Kyrpides N."/>
            <person name="Lykidis A."/>
            <person name="da Costa M.S."/>
            <person name="Rainey F.A."/>
            <person name="Empadinhas N."/>
            <person name="Jolivet E."/>
            <person name="Battista J.R."/>
            <person name="Richardson P."/>
        </authorList>
    </citation>
    <scope>NUCLEOTIDE SEQUENCE [LARGE SCALE GENOMIC DNA]</scope>
    <source>
        <strain>DSM 9941 / JCM 11954 / NBRC 16129 / PRD-1</strain>
    </source>
</reference>
<protein>
    <recommendedName>
        <fullName evidence="1">Cobalt-precorrin-5B C(1)-methyltransferase</fullName>
        <ecNumber evidence="1">2.1.1.195</ecNumber>
    </recommendedName>
    <alternativeName>
        <fullName evidence="1">Cobalt-precorrin-6A synthase</fullName>
    </alternativeName>
</protein>
<accession>Q1AYB7</accession>